<feature type="chain" id="PRO_0000135894" description="Histidinol dehydrogenase">
    <location>
        <begin position="1"/>
        <end position="429"/>
    </location>
</feature>
<feature type="active site" description="Proton acceptor" evidence="1">
    <location>
        <position position="327"/>
    </location>
</feature>
<feature type="active site" description="Proton acceptor" evidence="1">
    <location>
        <position position="328"/>
    </location>
</feature>
<feature type="binding site" evidence="1">
    <location>
        <position position="131"/>
    </location>
    <ligand>
        <name>NAD(+)</name>
        <dbReference type="ChEBI" id="CHEBI:57540"/>
    </ligand>
</feature>
<feature type="binding site" evidence="1">
    <location>
        <position position="193"/>
    </location>
    <ligand>
        <name>NAD(+)</name>
        <dbReference type="ChEBI" id="CHEBI:57540"/>
    </ligand>
</feature>
<feature type="binding site" evidence="1">
    <location>
        <position position="216"/>
    </location>
    <ligand>
        <name>NAD(+)</name>
        <dbReference type="ChEBI" id="CHEBI:57540"/>
    </ligand>
</feature>
<feature type="binding site" evidence="1">
    <location>
        <position position="239"/>
    </location>
    <ligand>
        <name>substrate</name>
    </ligand>
</feature>
<feature type="binding site" evidence="1">
    <location>
        <position position="261"/>
    </location>
    <ligand>
        <name>substrate</name>
    </ligand>
</feature>
<feature type="binding site" evidence="1">
    <location>
        <position position="261"/>
    </location>
    <ligand>
        <name>Zn(2+)</name>
        <dbReference type="ChEBI" id="CHEBI:29105"/>
    </ligand>
</feature>
<feature type="binding site" evidence="1">
    <location>
        <position position="264"/>
    </location>
    <ligand>
        <name>substrate</name>
    </ligand>
</feature>
<feature type="binding site" evidence="1">
    <location>
        <position position="264"/>
    </location>
    <ligand>
        <name>Zn(2+)</name>
        <dbReference type="ChEBI" id="CHEBI:29105"/>
    </ligand>
</feature>
<feature type="binding site" evidence="1">
    <location>
        <position position="328"/>
    </location>
    <ligand>
        <name>substrate</name>
    </ligand>
</feature>
<feature type="binding site" evidence="1">
    <location>
        <position position="361"/>
    </location>
    <ligand>
        <name>substrate</name>
    </ligand>
</feature>
<feature type="binding site" evidence="1">
    <location>
        <position position="361"/>
    </location>
    <ligand>
        <name>Zn(2+)</name>
        <dbReference type="ChEBI" id="CHEBI:29105"/>
    </ligand>
</feature>
<feature type="binding site" evidence="1">
    <location>
        <position position="415"/>
    </location>
    <ligand>
        <name>substrate</name>
    </ligand>
</feature>
<feature type="binding site" evidence="1">
    <location>
        <position position="420"/>
    </location>
    <ligand>
        <name>substrate</name>
    </ligand>
</feature>
<feature type="binding site" evidence="1">
    <location>
        <position position="420"/>
    </location>
    <ligand>
        <name>Zn(2+)</name>
        <dbReference type="ChEBI" id="CHEBI:29105"/>
    </ligand>
</feature>
<gene>
    <name type="primary">hisD</name>
    <name type="ordered locus">MJ1456</name>
</gene>
<protein>
    <recommendedName>
        <fullName>Histidinol dehydrogenase</fullName>
        <shortName>HDH</shortName>
        <ecNumber>1.1.1.23</ecNumber>
    </recommendedName>
</protein>
<organism>
    <name type="scientific">Methanocaldococcus jannaschii (strain ATCC 43067 / DSM 2661 / JAL-1 / JCM 10045 / NBRC 100440)</name>
    <name type="common">Methanococcus jannaschii</name>
    <dbReference type="NCBI Taxonomy" id="243232"/>
    <lineage>
        <taxon>Archaea</taxon>
        <taxon>Methanobacteriati</taxon>
        <taxon>Methanobacteriota</taxon>
        <taxon>Methanomada group</taxon>
        <taxon>Methanococci</taxon>
        <taxon>Methanococcales</taxon>
        <taxon>Methanocaldococcaceae</taxon>
        <taxon>Methanocaldococcus</taxon>
    </lineage>
</organism>
<sequence length="429" mass="47433">MVTGMIIKKIKELTKEEEEKIINRNKANFEEILPTVMEILKDVKEKGDEALKYYTKKFDGVEIEDFKVTDEEIEEAYNSVDYKVVEAIERAKENIYFFHKKQMEQIKDLNVENNGIILGQVVRAIEKVGCYVPGGRAFYPSTVLMTTIPAKVAGCEEIYITSPPTKDGKGNPATLIAGDIVGVSAIYKVGGVQAIGALAYGTETIPKVDIIVGPGNIYVTTAKKMVYGEVAIDFLAGPSEVLIIADETANAEFVALDFIAQAEHDPNASCVITTTSEKKAEEIKNKIFEEIEKAERKEIILKALENSAILIGDLEECIEFSNKYAPEHLEILTKNPEEVLNKIKHAGSVFLGEYSPVPVGDYASGTNHVLPTSQFARMSSGLNVETFLKKITYQKLDKESLKNIADIVITLAEAEGLFGHAEAVRRRLK</sequence>
<comment type="function">
    <text evidence="1">Catalyzes the sequential NAD-dependent oxidations of L-histidinol to L-histidinaldehyde and then to L-histidine.</text>
</comment>
<comment type="catalytic activity">
    <reaction>
        <text>L-histidinol + 2 NAD(+) + H2O = L-histidine + 2 NADH + 3 H(+)</text>
        <dbReference type="Rhea" id="RHEA:20641"/>
        <dbReference type="ChEBI" id="CHEBI:15377"/>
        <dbReference type="ChEBI" id="CHEBI:15378"/>
        <dbReference type="ChEBI" id="CHEBI:57540"/>
        <dbReference type="ChEBI" id="CHEBI:57595"/>
        <dbReference type="ChEBI" id="CHEBI:57699"/>
        <dbReference type="ChEBI" id="CHEBI:57945"/>
        <dbReference type="EC" id="1.1.1.23"/>
    </reaction>
</comment>
<comment type="cofactor">
    <cofactor evidence="1">
        <name>Zn(2+)</name>
        <dbReference type="ChEBI" id="CHEBI:29105"/>
    </cofactor>
    <text evidence="1">Binds 1 zinc ion per subunit.</text>
</comment>
<comment type="pathway">
    <text>Amino-acid biosynthesis; L-histidine biosynthesis; L-histidine from 5-phospho-alpha-D-ribose 1-diphosphate: step 9/9.</text>
</comment>
<comment type="similarity">
    <text evidence="2">Belongs to the histidinol dehydrogenase family.</text>
</comment>
<keyword id="KW-0028">Amino-acid biosynthesis</keyword>
<keyword id="KW-0368">Histidine biosynthesis</keyword>
<keyword id="KW-0479">Metal-binding</keyword>
<keyword id="KW-0520">NAD</keyword>
<keyword id="KW-0560">Oxidoreductase</keyword>
<keyword id="KW-1185">Reference proteome</keyword>
<keyword id="KW-0862">Zinc</keyword>
<reference key="1">
    <citation type="journal article" date="1996" name="Science">
        <title>Complete genome sequence of the methanogenic archaeon, Methanococcus jannaschii.</title>
        <authorList>
            <person name="Bult C.J."/>
            <person name="White O."/>
            <person name="Olsen G.J."/>
            <person name="Zhou L."/>
            <person name="Fleischmann R.D."/>
            <person name="Sutton G.G."/>
            <person name="Blake J.A."/>
            <person name="FitzGerald L.M."/>
            <person name="Clayton R.A."/>
            <person name="Gocayne J.D."/>
            <person name="Kerlavage A.R."/>
            <person name="Dougherty B.A."/>
            <person name="Tomb J.-F."/>
            <person name="Adams M.D."/>
            <person name="Reich C.I."/>
            <person name="Overbeek R."/>
            <person name="Kirkness E.F."/>
            <person name="Weinstock K.G."/>
            <person name="Merrick J.M."/>
            <person name="Glodek A."/>
            <person name="Scott J.L."/>
            <person name="Geoghagen N.S.M."/>
            <person name="Weidman J.F."/>
            <person name="Fuhrmann J.L."/>
            <person name="Nguyen D."/>
            <person name="Utterback T.R."/>
            <person name="Kelley J.M."/>
            <person name="Peterson J.D."/>
            <person name="Sadow P.W."/>
            <person name="Hanna M.C."/>
            <person name="Cotton M.D."/>
            <person name="Roberts K.M."/>
            <person name="Hurst M.A."/>
            <person name="Kaine B.P."/>
            <person name="Borodovsky M."/>
            <person name="Klenk H.-P."/>
            <person name="Fraser C.M."/>
            <person name="Smith H.O."/>
            <person name="Woese C.R."/>
            <person name="Venter J.C."/>
        </authorList>
    </citation>
    <scope>NUCLEOTIDE SEQUENCE [LARGE SCALE GENOMIC DNA]</scope>
    <source>
        <strain>ATCC 43067 / DSM 2661 / JAL-1 / JCM 10045 / NBRC 100440</strain>
    </source>
</reference>
<proteinExistence type="inferred from homology"/>
<name>HISX_METJA</name>
<accession>Q58851</accession>
<dbReference type="EC" id="1.1.1.23"/>
<dbReference type="EMBL" id="L77117">
    <property type="protein sequence ID" value="AAB99465.1"/>
    <property type="molecule type" value="Genomic_DNA"/>
</dbReference>
<dbReference type="PIR" id="G64481">
    <property type="entry name" value="G64481"/>
</dbReference>
<dbReference type="SMR" id="Q58851"/>
<dbReference type="FunCoup" id="Q58851">
    <property type="interactions" value="229"/>
</dbReference>
<dbReference type="STRING" id="243232.MJ_1456"/>
<dbReference type="PaxDb" id="243232-MJ_1456"/>
<dbReference type="EnsemblBacteria" id="AAB99465">
    <property type="protein sequence ID" value="AAB99465"/>
    <property type="gene ID" value="MJ_1456"/>
</dbReference>
<dbReference type="KEGG" id="mja:MJ_1456"/>
<dbReference type="eggNOG" id="arCOG04352">
    <property type="taxonomic scope" value="Archaea"/>
</dbReference>
<dbReference type="HOGENOM" id="CLU_006732_3_0_2"/>
<dbReference type="InParanoid" id="Q58851"/>
<dbReference type="PhylomeDB" id="Q58851"/>
<dbReference type="UniPathway" id="UPA00031">
    <property type="reaction ID" value="UER00014"/>
</dbReference>
<dbReference type="Proteomes" id="UP000000805">
    <property type="component" value="Chromosome"/>
</dbReference>
<dbReference type="GO" id="GO:0005737">
    <property type="term" value="C:cytoplasm"/>
    <property type="evidence" value="ECO:0000318"/>
    <property type="project" value="GO_Central"/>
</dbReference>
<dbReference type="GO" id="GO:0004399">
    <property type="term" value="F:histidinol dehydrogenase activity"/>
    <property type="evidence" value="ECO:0000318"/>
    <property type="project" value="GO_Central"/>
</dbReference>
<dbReference type="GO" id="GO:0051287">
    <property type="term" value="F:NAD binding"/>
    <property type="evidence" value="ECO:0007669"/>
    <property type="project" value="InterPro"/>
</dbReference>
<dbReference type="GO" id="GO:0008270">
    <property type="term" value="F:zinc ion binding"/>
    <property type="evidence" value="ECO:0007669"/>
    <property type="project" value="UniProtKB-UniRule"/>
</dbReference>
<dbReference type="GO" id="GO:0000105">
    <property type="term" value="P:L-histidine biosynthetic process"/>
    <property type="evidence" value="ECO:0000318"/>
    <property type="project" value="GO_Central"/>
</dbReference>
<dbReference type="CDD" id="cd06572">
    <property type="entry name" value="Histidinol_dh"/>
    <property type="match status" value="1"/>
</dbReference>
<dbReference type="FunFam" id="3.40.50.1980:FF:000001">
    <property type="entry name" value="Histidinol dehydrogenase"/>
    <property type="match status" value="1"/>
</dbReference>
<dbReference type="FunFam" id="3.40.50.1980:FF:000026">
    <property type="entry name" value="Histidinol dehydrogenase"/>
    <property type="match status" value="1"/>
</dbReference>
<dbReference type="Gene3D" id="1.20.5.1300">
    <property type="match status" value="1"/>
</dbReference>
<dbReference type="Gene3D" id="3.40.50.1980">
    <property type="entry name" value="Nitrogenase molybdenum iron protein domain"/>
    <property type="match status" value="2"/>
</dbReference>
<dbReference type="HAMAP" id="MF_01024">
    <property type="entry name" value="HisD"/>
    <property type="match status" value="1"/>
</dbReference>
<dbReference type="InterPro" id="IPR016161">
    <property type="entry name" value="Ald_DH/histidinol_DH"/>
</dbReference>
<dbReference type="InterPro" id="IPR001692">
    <property type="entry name" value="Histidinol_DH_CS"/>
</dbReference>
<dbReference type="InterPro" id="IPR022695">
    <property type="entry name" value="Histidinol_DH_monofunct"/>
</dbReference>
<dbReference type="InterPro" id="IPR012131">
    <property type="entry name" value="Hstdl_DH"/>
</dbReference>
<dbReference type="NCBIfam" id="TIGR00069">
    <property type="entry name" value="hisD"/>
    <property type="match status" value="1"/>
</dbReference>
<dbReference type="PANTHER" id="PTHR21256:SF2">
    <property type="entry name" value="HISTIDINE BIOSYNTHESIS TRIFUNCTIONAL PROTEIN"/>
    <property type="match status" value="1"/>
</dbReference>
<dbReference type="PANTHER" id="PTHR21256">
    <property type="entry name" value="HISTIDINOL DEHYDROGENASE HDH"/>
    <property type="match status" value="1"/>
</dbReference>
<dbReference type="Pfam" id="PF00815">
    <property type="entry name" value="Histidinol_dh"/>
    <property type="match status" value="1"/>
</dbReference>
<dbReference type="PIRSF" id="PIRSF000099">
    <property type="entry name" value="Histidinol_dh"/>
    <property type="match status" value="1"/>
</dbReference>
<dbReference type="PRINTS" id="PR00083">
    <property type="entry name" value="HOLDHDRGNASE"/>
</dbReference>
<dbReference type="SUPFAM" id="SSF53720">
    <property type="entry name" value="ALDH-like"/>
    <property type="match status" value="1"/>
</dbReference>
<dbReference type="PROSITE" id="PS00611">
    <property type="entry name" value="HISOL_DEHYDROGENASE"/>
    <property type="match status" value="1"/>
</dbReference>
<evidence type="ECO:0000250" key="1"/>
<evidence type="ECO:0000305" key="2"/>